<keyword id="KW-1015">Disulfide bond</keyword>
<keyword id="KW-0378">Hydrolase</keyword>
<keyword id="KW-0645">Protease</keyword>
<keyword id="KW-1185">Reference proteome</keyword>
<keyword id="KW-0720">Serine protease</keyword>
<keyword id="KW-0732">Signal</keyword>
<keyword id="KW-0865">Zymogen</keyword>
<comment type="function">
    <text evidence="4">Major function may be to aid in digestion.</text>
</comment>
<comment type="tissue specificity">
    <text evidence="3">Abundantly expressed in the larval gut.</text>
</comment>
<comment type="developmental stage">
    <text evidence="3">Expression appears at the late embryo stage and continues to increase in abundance throughout the larval stage. No expression in pupae but is expressed in the adult.</text>
</comment>
<comment type="similarity">
    <text evidence="2">Belongs to the peptidase S1 family.</text>
</comment>
<organism>
    <name type="scientific">Drosophila melanogaster</name>
    <name type="common">Fruit fly</name>
    <dbReference type="NCBI Taxonomy" id="7227"/>
    <lineage>
        <taxon>Eukaryota</taxon>
        <taxon>Metazoa</taxon>
        <taxon>Ecdysozoa</taxon>
        <taxon>Arthropoda</taxon>
        <taxon>Hexapoda</taxon>
        <taxon>Insecta</taxon>
        <taxon>Pterygota</taxon>
        <taxon>Neoptera</taxon>
        <taxon>Endopterygota</taxon>
        <taxon>Diptera</taxon>
        <taxon>Brachycera</taxon>
        <taxon>Muscomorpha</taxon>
        <taxon>Ephydroidea</taxon>
        <taxon>Drosophilidae</taxon>
        <taxon>Drosophila</taxon>
        <taxon>Sophophora</taxon>
    </lineage>
</organism>
<evidence type="ECO:0000250" key="1"/>
<evidence type="ECO:0000255" key="2">
    <source>
        <dbReference type="PROSITE-ProRule" id="PRU00274"/>
    </source>
</evidence>
<evidence type="ECO:0000269" key="3">
    <source>
    </source>
</evidence>
<evidence type="ECO:0000303" key="4">
    <source>
    </source>
</evidence>
<evidence type="ECO:0000305" key="5"/>
<evidence type="ECO:0000312" key="6">
    <source>
        <dbReference type="FlyBase" id="FBgn0003357"/>
    </source>
</evidence>
<protein>
    <recommendedName>
        <fullName evidence="4">Serine protease 2</fullName>
        <ecNumber>3.4.21.-</ecNumber>
    </recommendedName>
    <alternativeName>
        <fullName evidence="5">Protein Jonah 99Ciii</fullName>
    </alternativeName>
</protein>
<sequence>MKLFVFLALAVAAATAVPAPAQKLTPTPIKDIQGRITNGYPAYEGKVPYIVGLLFSGNGNWWCGGSIIGNTWVLTAAHCTNGASGVTINYGASIRTQPQYTHWVGSGDIIQHHHYNSGNLHNDISLIRTPHVDFWSLVNKVELPSYNDRYQDYAGWWAVASGWGGTYDGSPLPDWLQSVDVQIISQSDCSRTWSLHDNMICINTDGGKSTCGGDSGGPLVTHDGNRLVGVTSFGSAAGCQSGAPAVFSRVTGYLDWIRDNTGISY</sequence>
<feature type="signal peptide" evidence="5">
    <location>
        <begin position="1"/>
        <end position="21"/>
    </location>
</feature>
<feature type="propeptide" id="PRO_0000028137" evidence="1">
    <location>
        <begin position="22"/>
        <end position="35"/>
    </location>
</feature>
<feature type="chain" id="PRO_0000028138" description="Serine protease 2">
    <location>
        <begin position="36"/>
        <end position="265"/>
    </location>
</feature>
<feature type="domain" description="Peptidase S1" evidence="2">
    <location>
        <begin position="36"/>
        <end position="262"/>
    </location>
</feature>
<feature type="active site" description="Charge relay system" evidence="2">
    <location>
        <position position="78"/>
    </location>
</feature>
<feature type="active site" description="Charge relay system" evidence="2">
    <location>
        <position position="123"/>
    </location>
</feature>
<feature type="active site" description="Charge relay system" evidence="2">
    <location>
        <position position="215"/>
    </location>
</feature>
<feature type="disulfide bond" evidence="2">
    <location>
        <begin position="63"/>
        <end position="79"/>
    </location>
</feature>
<feature type="disulfide bond" evidence="2">
    <location>
        <begin position="189"/>
        <end position="201"/>
    </location>
</feature>
<feature type="disulfide bond" evidence="2">
    <location>
        <begin position="211"/>
        <end position="239"/>
    </location>
</feature>
<feature type="sequence conflict" description="In Ref. 1; AAB02553." evidence="5" ref="1">
    <original>A</original>
    <variation>T</variation>
    <location>
        <position position="14"/>
    </location>
</feature>
<feature type="sequence conflict" description="In Ref. 4; AAA18625." evidence="5" ref="4">
    <original>L</original>
    <variation>V</variation>
    <location>
        <position position="74"/>
    </location>
</feature>
<feature type="sequence conflict" description="In Ref. 4; AAA18625." evidence="5" ref="4">
    <original>V</original>
    <variation>A</variation>
    <location>
        <position position="181"/>
    </location>
</feature>
<feature type="sequence conflict" description="In Ref. 4; AAA18625." evidence="5" ref="4">
    <original>S</original>
    <variation>R</variation>
    <location>
        <position position="187"/>
    </location>
</feature>
<feature type="sequence conflict" description="In Ref. 4; AAA18625." evidence="5" ref="4">
    <original>S</original>
    <variation>T</variation>
    <location>
        <position position="215"/>
    </location>
</feature>
<proteinExistence type="evidence at transcript level"/>
<reference key="1">
    <citation type="journal article" date="1989" name="Mol. Cell. Biol.">
        <title>Levels of RNA from a family of putative serine protease genes are reduced in Drosophila melanogaster dunce mutants and are regulated by cyclic AMP.</title>
        <authorList>
            <person name="Yun Y."/>
            <person name="Davis R.L."/>
        </authorList>
    </citation>
    <scope>NUCLEOTIDE SEQUENCE [GENOMIC DNA]</scope>
    <scope>TISSUE SPECIFICITY</scope>
    <scope>DEVELOPMENTAL STAGE</scope>
    <source>
        <strain>Canton-S</strain>
    </source>
</reference>
<reference key="2">
    <citation type="journal article" date="2000" name="Science">
        <title>The genome sequence of Drosophila melanogaster.</title>
        <authorList>
            <person name="Adams M.D."/>
            <person name="Celniker S.E."/>
            <person name="Holt R.A."/>
            <person name="Evans C.A."/>
            <person name="Gocayne J.D."/>
            <person name="Amanatides P.G."/>
            <person name="Scherer S.E."/>
            <person name="Li P.W."/>
            <person name="Hoskins R.A."/>
            <person name="Galle R.F."/>
            <person name="George R.A."/>
            <person name="Lewis S.E."/>
            <person name="Richards S."/>
            <person name="Ashburner M."/>
            <person name="Henderson S.N."/>
            <person name="Sutton G.G."/>
            <person name="Wortman J.R."/>
            <person name="Yandell M.D."/>
            <person name="Zhang Q."/>
            <person name="Chen L.X."/>
            <person name="Brandon R.C."/>
            <person name="Rogers Y.-H.C."/>
            <person name="Blazej R.G."/>
            <person name="Champe M."/>
            <person name="Pfeiffer B.D."/>
            <person name="Wan K.H."/>
            <person name="Doyle C."/>
            <person name="Baxter E.G."/>
            <person name="Helt G."/>
            <person name="Nelson C.R."/>
            <person name="Miklos G.L.G."/>
            <person name="Abril J.F."/>
            <person name="Agbayani A."/>
            <person name="An H.-J."/>
            <person name="Andrews-Pfannkoch C."/>
            <person name="Baldwin D."/>
            <person name="Ballew R.M."/>
            <person name="Basu A."/>
            <person name="Baxendale J."/>
            <person name="Bayraktaroglu L."/>
            <person name="Beasley E.M."/>
            <person name="Beeson K.Y."/>
            <person name="Benos P.V."/>
            <person name="Berman B.P."/>
            <person name="Bhandari D."/>
            <person name="Bolshakov S."/>
            <person name="Borkova D."/>
            <person name="Botchan M.R."/>
            <person name="Bouck J."/>
            <person name="Brokstein P."/>
            <person name="Brottier P."/>
            <person name="Burtis K.C."/>
            <person name="Busam D.A."/>
            <person name="Butler H."/>
            <person name="Cadieu E."/>
            <person name="Center A."/>
            <person name="Chandra I."/>
            <person name="Cherry J.M."/>
            <person name="Cawley S."/>
            <person name="Dahlke C."/>
            <person name="Davenport L.B."/>
            <person name="Davies P."/>
            <person name="de Pablos B."/>
            <person name="Delcher A."/>
            <person name="Deng Z."/>
            <person name="Mays A.D."/>
            <person name="Dew I."/>
            <person name="Dietz S.M."/>
            <person name="Dodson K."/>
            <person name="Doup L.E."/>
            <person name="Downes M."/>
            <person name="Dugan-Rocha S."/>
            <person name="Dunkov B.C."/>
            <person name="Dunn P."/>
            <person name="Durbin K.J."/>
            <person name="Evangelista C.C."/>
            <person name="Ferraz C."/>
            <person name="Ferriera S."/>
            <person name="Fleischmann W."/>
            <person name="Fosler C."/>
            <person name="Gabrielian A.E."/>
            <person name="Garg N.S."/>
            <person name="Gelbart W.M."/>
            <person name="Glasser K."/>
            <person name="Glodek A."/>
            <person name="Gong F."/>
            <person name="Gorrell J.H."/>
            <person name="Gu Z."/>
            <person name="Guan P."/>
            <person name="Harris M."/>
            <person name="Harris N.L."/>
            <person name="Harvey D.A."/>
            <person name="Heiman T.J."/>
            <person name="Hernandez J.R."/>
            <person name="Houck J."/>
            <person name="Hostin D."/>
            <person name="Houston K.A."/>
            <person name="Howland T.J."/>
            <person name="Wei M.-H."/>
            <person name="Ibegwam C."/>
            <person name="Jalali M."/>
            <person name="Kalush F."/>
            <person name="Karpen G.H."/>
            <person name="Ke Z."/>
            <person name="Kennison J.A."/>
            <person name="Ketchum K.A."/>
            <person name="Kimmel B.E."/>
            <person name="Kodira C.D."/>
            <person name="Kraft C.L."/>
            <person name="Kravitz S."/>
            <person name="Kulp D."/>
            <person name="Lai Z."/>
            <person name="Lasko P."/>
            <person name="Lei Y."/>
            <person name="Levitsky A.A."/>
            <person name="Li J.H."/>
            <person name="Li Z."/>
            <person name="Liang Y."/>
            <person name="Lin X."/>
            <person name="Liu X."/>
            <person name="Mattei B."/>
            <person name="McIntosh T.C."/>
            <person name="McLeod M.P."/>
            <person name="McPherson D."/>
            <person name="Merkulov G."/>
            <person name="Milshina N.V."/>
            <person name="Mobarry C."/>
            <person name="Morris J."/>
            <person name="Moshrefi A."/>
            <person name="Mount S.M."/>
            <person name="Moy M."/>
            <person name="Murphy B."/>
            <person name="Murphy L."/>
            <person name="Muzny D.M."/>
            <person name="Nelson D.L."/>
            <person name="Nelson D.R."/>
            <person name="Nelson K.A."/>
            <person name="Nixon K."/>
            <person name="Nusskern D.R."/>
            <person name="Pacleb J.M."/>
            <person name="Palazzolo M."/>
            <person name="Pittman G.S."/>
            <person name="Pan S."/>
            <person name="Pollard J."/>
            <person name="Puri V."/>
            <person name="Reese M.G."/>
            <person name="Reinert K."/>
            <person name="Remington K."/>
            <person name="Saunders R.D.C."/>
            <person name="Scheeler F."/>
            <person name="Shen H."/>
            <person name="Shue B.C."/>
            <person name="Siden-Kiamos I."/>
            <person name="Simpson M."/>
            <person name="Skupski M.P."/>
            <person name="Smith T.J."/>
            <person name="Spier E."/>
            <person name="Spradling A.C."/>
            <person name="Stapleton M."/>
            <person name="Strong R."/>
            <person name="Sun E."/>
            <person name="Svirskas R."/>
            <person name="Tector C."/>
            <person name="Turner R."/>
            <person name="Venter E."/>
            <person name="Wang A.H."/>
            <person name="Wang X."/>
            <person name="Wang Z.-Y."/>
            <person name="Wassarman D.A."/>
            <person name="Weinstock G.M."/>
            <person name="Weissenbach J."/>
            <person name="Williams S.M."/>
            <person name="Woodage T."/>
            <person name="Worley K.C."/>
            <person name="Wu D."/>
            <person name="Yang S."/>
            <person name="Yao Q.A."/>
            <person name="Ye J."/>
            <person name="Yeh R.-F."/>
            <person name="Zaveri J.S."/>
            <person name="Zhan M."/>
            <person name="Zhang G."/>
            <person name="Zhao Q."/>
            <person name="Zheng L."/>
            <person name="Zheng X.H."/>
            <person name="Zhong F.N."/>
            <person name="Zhong W."/>
            <person name="Zhou X."/>
            <person name="Zhu S.C."/>
            <person name="Zhu X."/>
            <person name="Smith H.O."/>
            <person name="Gibbs R.A."/>
            <person name="Myers E.W."/>
            <person name="Rubin G.M."/>
            <person name="Venter J.C."/>
        </authorList>
    </citation>
    <scope>NUCLEOTIDE SEQUENCE [LARGE SCALE GENOMIC DNA]</scope>
    <source>
        <strain>Berkeley</strain>
    </source>
</reference>
<reference key="3">
    <citation type="journal article" date="2002" name="Genome Biol.">
        <title>Annotation of the Drosophila melanogaster euchromatic genome: a systematic review.</title>
        <authorList>
            <person name="Misra S."/>
            <person name="Crosby M.A."/>
            <person name="Mungall C.J."/>
            <person name="Matthews B.B."/>
            <person name="Campbell K.S."/>
            <person name="Hradecky P."/>
            <person name="Huang Y."/>
            <person name="Kaminker J.S."/>
            <person name="Millburn G.H."/>
            <person name="Prochnik S.E."/>
            <person name="Smith C.D."/>
            <person name="Tupy J.L."/>
            <person name="Whitfield E.J."/>
            <person name="Bayraktaroglu L."/>
            <person name="Berman B.P."/>
            <person name="Bettencourt B.R."/>
            <person name="Celniker S.E."/>
            <person name="de Grey A.D.N.J."/>
            <person name="Drysdale R.A."/>
            <person name="Harris N.L."/>
            <person name="Richter J."/>
            <person name="Russo S."/>
            <person name="Schroeder A.J."/>
            <person name="Shu S.Q."/>
            <person name="Stapleton M."/>
            <person name="Yamada C."/>
            <person name="Ashburner M."/>
            <person name="Gelbart W.M."/>
            <person name="Rubin G.M."/>
            <person name="Lewis S.E."/>
        </authorList>
    </citation>
    <scope>GENOME REANNOTATION</scope>
    <source>
        <strain>Berkeley</strain>
    </source>
</reference>
<reference key="4">
    <citation type="submission" date="1994-05" db="EMBL/GenBank/DDBJ databases">
        <title>Serine protease genes expressed in haematophagous insects.</title>
        <authorList>
            <person name="Elvin C.M."/>
            <person name="Bunch R."/>
            <person name="Vuocolo T."/>
            <person name="Hemingway J."/>
            <person name="Smith W.J."/>
            <person name="Riddles P.W."/>
        </authorList>
    </citation>
    <scope>NUCLEOTIDE SEQUENCE [MRNA] OF 72-219</scope>
</reference>
<accession>C0HKF8</accession>
<accession>P17205</accession>
<accession>Q23988</accession>
<accession>Q9VAD9</accession>
<accession>Q9VAE0</accession>
<dbReference type="EC" id="3.4.21.-"/>
<dbReference type="EMBL" id="M24379">
    <property type="protein sequence ID" value="AAB02553.1"/>
    <property type="molecule type" value="Genomic_DNA"/>
</dbReference>
<dbReference type="EMBL" id="AE014297">
    <property type="protein sequence ID" value="AAN14201.1"/>
    <property type="molecule type" value="Genomic_DNA"/>
</dbReference>
<dbReference type="EMBL" id="U09800">
    <property type="protein sequence ID" value="AAA18625.1"/>
    <property type="molecule type" value="mRNA"/>
</dbReference>
<dbReference type="PIR" id="A38894">
    <property type="entry name" value="A38894"/>
</dbReference>
<dbReference type="RefSeq" id="NP_001287598.1">
    <property type="nucleotide sequence ID" value="NM_001300669.1"/>
</dbReference>
<dbReference type="RefSeq" id="NP_733330.1">
    <property type="nucleotide sequence ID" value="NM_170451.3"/>
</dbReference>
<dbReference type="SMR" id="C0HKF8"/>
<dbReference type="FunCoup" id="C0HKF8">
    <property type="interactions" value="51"/>
</dbReference>
<dbReference type="IntAct" id="C0HKF8">
    <property type="interactions" value="17"/>
</dbReference>
<dbReference type="DNASU" id="43544"/>
<dbReference type="EnsemblMetazoa" id="FBtr0085502">
    <property type="protein sequence ID" value="FBpp0084868"/>
    <property type="gene ID" value="FBgn0003357"/>
</dbReference>
<dbReference type="EnsemblMetazoa" id="FBtr0085512">
    <property type="protein sequence ID" value="FBpp0084878"/>
    <property type="gene ID" value="FBgn0003356"/>
</dbReference>
<dbReference type="EnsemblMetazoa" id="FBtr0346340">
    <property type="protein sequence ID" value="FBpp0312057"/>
    <property type="gene ID" value="FBgn0003357"/>
</dbReference>
<dbReference type="GeneID" id="43543"/>
<dbReference type="GeneID" id="43544"/>
<dbReference type="KEGG" id="dme:Dmel_CG31034"/>
<dbReference type="KEGG" id="dme:Dmel_CG31362"/>
<dbReference type="AGR" id="FB:FBgn0003356"/>
<dbReference type="AGR" id="FB:FBgn0003357"/>
<dbReference type="CTD" id="43543"/>
<dbReference type="CTD" id="43544"/>
<dbReference type="FlyBase" id="FBgn0003357">
    <property type="gene designation" value="Jon99Ciii"/>
</dbReference>
<dbReference type="VEuPathDB" id="VectorBase:FBgn0003356"/>
<dbReference type="VEuPathDB" id="VectorBase:FBgn0003357"/>
<dbReference type="GeneTree" id="ENSGT00840000130082"/>
<dbReference type="InParanoid" id="C0HKF8"/>
<dbReference type="OMA" id="FIQHEHY"/>
<dbReference type="OrthoDB" id="7840934at2759"/>
<dbReference type="PRO" id="PR:C0HKF8"/>
<dbReference type="Proteomes" id="UP000000803">
    <property type="component" value="Chromosome 3R"/>
</dbReference>
<dbReference type="Bgee" id="FBgn0003356">
    <property type="expression patterns" value="Expressed in enterocyte of anterior adult midgut epithelium in digestive tract and 59 other cell types or tissues"/>
</dbReference>
<dbReference type="ExpressionAtlas" id="C0HKF8">
    <property type="expression patterns" value="baseline and differential"/>
</dbReference>
<dbReference type="GO" id="GO:0005615">
    <property type="term" value="C:extracellular space"/>
    <property type="evidence" value="ECO:0000318"/>
    <property type="project" value="GO_Central"/>
</dbReference>
<dbReference type="GO" id="GO:0017171">
    <property type="term" value="F:serine hydrolase activity"/>
    <property type="evidence" value="ECO:0007005"/>
    <property type="project" value="FlyBase"/>
</dbReference>
<dbReference type="GO" id="GO:0004252">
    <property type="term" value="F:serine-type endopeptidase activity"/>
    <property type="evidence" value="ECO:0000255"/>
    <property type="project" value="FlyBase"/>
</dbReference>
<dbReference type="GO" id="GO:0006508">
    <property type="term" value="P:proteolysis"/>
    <property type="evidence" value="ECO:0000255"/>
    <property type="project" value="FlyBase"/>
</dbReference>
<dbReference type="CDD" id="cd00190">
    <property type="entry name" value="Tryp_SPc"/>
    <property type="match status" value="1"/>
</dbReference>
<dbReference type="FunFam" id="2.40.10.10:FF:000025">
    <property type="entry name" value="serine proteases 1/2"/>
    <property type="match status" value="1"/>
</dbReference>
<dbReference type="FunFam" id="2.40.10.10:FF:000043">
    <property type="entry name" value="serine proteases 1/2"/>
    <property type="match status" value="1"/>
</dbReference>
<dbReference type="Gene3D" id="2.40.10.10">
    <property type="entry name" value="Trypsin-like serine proteases"/>
    <property type="match status" value="2"/>
</dbReference>
<dbReference type="InterPro" id="IPR050430">
    <property type="entry name" value="Peptidase_S1"/>
</dbReference>
<dbReference type="InterPro" id="IPR009003">
    <property type="entry name" value="Peptidase_S1_PA"/>
</dbReference>
<dbReference type="InterPro" id="IPR043504">
    <property type="entry name" value="Peptidase_S1_PA_chymotrypsin"/>
</dbReference>
<dbReference type="InterPro" id="IPR001314">
    <property type="entry name" value="Peptidase_S1A"/>
</dbReference>
<dbReference type="InterPro" id="IPR001254">
    <property type="entry name" value="Trypsin_dom"/>
</dbReference>
<dbReference type="InterPro" id="IPR018114">
    <property type="entry name" value="TRYPSIN_HIS"/>
</dbReference>
<dbReference type="InterPro" id="IPR033116">
    <property type="entry name" value="TRYPSIN_SER"/>
</dbReference>
<dbReference type="PANTHER" id="PTHR24276:SF98">
    <property type="entry name" value="FI18310P1-RELATED"/>
    <property type="match status" value="1"/>
</dbReference>
<dbReference type="PANTHER" id="PTHR24276">
    <property type="entry name" value="POLYSERASE-RELATED"/>
    <property type="match status" value="1"/>
</dbReference>
<dbReference type="Pfam" id="PF00089">
    <property type="entry name" value="Trypsin"/>
    <property type="match status" value="1"/>
</dbReference>
<dbReference type="PRINTS" id="PR00722">
    <property type="entry name" value="CHYMOTRYPSIN"/>
</dbReference>
<dbReference type="SMART" id="SM00020">
    <property type="entry name" value="Tryp_SPc"/>
    <property type="match status" value="1"/>
</dbReference>
<dbReference type="SUPFAM" id="SSF50494">
    <property type="entry name" value="Trypsin-like serine proteases"/>
    <property type="match status" value="1"/>
</dbReference>
<dbReference type="PROSITE" id="PS50240">
    <property type="entry name" value="TRYPSIN_DOM"/>
    <property type="match status" value="1"/>
</dbReference>
<dbReference type="PROSITE" id="PS00134">
    <property type="entry name" value="TRYPSIN_HIS"/>
    <property type="match status" value="1"/>
</dbReference>
<dbReference type="PROSITE" id="PS00135">
    <property type="entry name" value="TRYPSIN_SER"/>
    <property type="match status" value="1"/>
</dbReference>
<gene>
    <name evidence="6" type="primary">Jon99Ciii</name>
    <name evidence="4" type="synonym">SER2</name>
    <name evidence="6" type="synonym">Ser99Db</name>
    <name evidence="6" type="ORF">CG15519</name>
</gene>
<name>SER2_DROME</name>